<accession>A4QIG3</accession>
<name>SECA2_CORGB</name>
<keyword id="KW-0067">ATP-binding</keyword>
<keyword id="KW-1003">Cell membrane</keyword>
<keyword id="KW-0963">Cytoplasm</keyword>
<keyword id="KW-0472">Membrane</keyword>
<keyword id="KW-0547">Nucleotide-binding</keyword>
<keyword id="KW-0653">Protein transport</keyword>
<keyword id="KW-1278">Translocase</keyword>
<keyword id="KW-0811">Translocation</keyword>
<keyword id="KW-0813">Transport</keyword>
<feature type="chain" id="PRO_0000318344" description="Protein translocase subunit SecA 2">
    <location>
        <begin position="1"/>
        <end position="763"/>
    </location>
</feature>
<feature type="binding site" evidence="1">
    <location>
        <position position="83"/>
    </location>
    <ligand>
        <name>ATP</name>
        <dbReference type="ChEBI" id="CHEBI:30616"/>
    </ligand>
</feature>
<feature type="binding site" evidence="1">
    <location>
        <begin position="101"/>
        <end position="105"/>
    </location>
    <ligand>
        <name>ATP</name>
        <dbReference type="ChEBI" id="CHEBI:30616"/>
    </ligand>
</feature>
<feature type="binding site" evidence="1">
    <location>
        <position position="490"/>
    </location>
    <ligand>
        <name>ATP</name>
        <dbReference type="ChEBI" id="CHEBI:30616"/>
    </ligand>
</feature>
<dbReference type="EC" id="7.4.2.8" evidence="1"/>
<dbReference type="EMBL" id="AP009044">
    <property type="protein sequence ID" value="BAF54492.1"/>
    <property type="molecule type" value="Genomic_DNA"/>
</dbReference>
<dbReference type="RefSeq" id="WP_011897227.1">
    <property type="nucleotide sequence ID" value="NC_009342.1"/>
</dbReference>
<dbReference type="SMR" id="A4QIG3"/>
<dbReference type="KEGG" id="cgt:cgR_1500"/>
<dbReference type="HOGENOM" id="CLU_005314_3_0_11"/>
<dbReference type="PhylomeDB" id="A4QIG3"/>
<dbReference type="Proteomes" id="UP000006698">
    <property type="component" value="Chromosome"/>
</dbReference>
<dbReference type="GO" id="GO:0031522">
    <property type="term" value="C:cell envelope Sec protein transport complex"/>
    <property type="evidence" value="ECO:0007669"/>
    <property type="project" value="TreeGrafter"/>
</dbReference>
<dbReference type="GO" id="GO:0005829">
    <property type="term" value="C:cytosol"/>
    <property type="evidence" value="ECO:0007669"/>
    <property type="project" value="TreeGrafter"/>
</dbReference>
<dbReference type="GO" id="GO:0005886">
    <property type="term" value="C:plasma membrane"/>
    <property type="evidence" value="ECO:0007669"/>
    <property type="project" value="UniProtKB-SubCell"/>
</dbReference>
<dbReference type="GO" id="GO:0005524">
    <property type="term" value="F:ATP binding"/>
    <property type="evidence" value="ECO:0007669"/>
    <property type="project" value="UniProtKB-UniRule"/>
</dbReference>
<dbReference type="GO" id="GO:0008564">
    <property type="term" value="F:protein-exporting ATPase activity"/>
    <property type="evidence" value="ECO:0007669"/>
    <property type="project" value="UniProtKB-EC"/>
</dbReference>
<dbReference type="GO" id="GO:0065002">
    <property type="term" value="P:intracellular protein transmembrane transport"/>
    <property type="evidence" value="ECO:0007669"/>
    <property type="project" value="UniProtKB-UniRule"/>
</dbReference>
<dbReference type="GO" id="GO:0017038">
    <property type="term" value="P:protein import"/>
    <property type="evidence" value="ECO:0007669"/>
    <property type="project" value="InterPro"/>
</dbReference>
<dbReference type="GO" id="GO:0006605">
    <property type="term" value="P:protein targeting"/>
    <property type="evidence" value="ECO:0007669"/>
    <property type="project" value="UniProtKB-UniRule"/>
</dbReference>
<dbReference type="GO" id="GO:0043952">
    <property type="term" value="P:protein transport by the Sec complex"/>
    <property type="evidence" value="ECO:0007669"/>
    <property type="project" value="TreeGrafter"/>
</dbReference>
<dbReference type="CDD" id="cd17928">
    <property type="entry name" value="DEXDc_SecA"/>
    <property type="match status" value="1"/>
</dbReference>
<dbReference type="CDD" id="cd18803">
    <property type="entry name" value="SF2_C_secA"/>
    <property type="match status" value="1"/>
</dbReference>
<dbReference type="FunFam" id="3.40.50.300:FF:000429">
    <property type="entry name" value="Preprotein translocase subunit SecA"/>
    <property type="match status" value="1"/>
</dbReference>
<dbReference type="Gene3D" id="1.10.3060.10">
    <property type="entry name" value="Helical scaffold and wing domains of SecA"/>
    <property type="match status" value="1"/>
</dbReference>
<dbReference type="Gene3D" id="3.40.50.300">
    <property type="entry name" value="P-loop containing nucleotide triphosphate hydrolases"/>
    <property type="match status" value="3"/>
</dbReference>
<dbReference type="Gene3D" id="3.90.1440.10">
    <property type="entry name" value="SecA, preprotein cross-linking domain"/>
    <property type="match status" value="1"/>
</dbReference>
<dbReference type="HAMAP" id="MF_01382">
    <property type="entry name" value="SecA"/>
    <property type="match status" value="1"/>
</dbReference>
<dbReference type="InterPro" id="IPR014001">
    <property type="entry name" value="Helicase_ATP-bd"/>
</dbReference>
<dbReference type="InterPro" id="IPR001650">
    <property type="entry name" value="Helicase_C-like"/>
</dbReference>
<dbReference type="InterPro" id="IPR027417">
    <property type="entry name" value="P-loop_NTPase"/>
</dbReference>
<dbReference type="InterPro" id="IPR000185">
    <property type="entry name" value="SecA"/>
</dbReference>
<dbReference type="InterPro" id="IPR026389">
    <property type="entry name" value="SecA_Actinobact-type"/>
</dbReference>
<dbReference type="InterPro" id="IPR020937">
    <property type="entry name" value="SecA_CS"/>
</dbReference>
<dbReference type="InterPro" id="IPR011115">
    <property type="entry name" value="SecA_DEAD"/>
</dbReference>
<dbReference type="InterPro" id="IPR014018">
    <property type="entry name" value="SecA_motor_DEAD"/>
</dbReference>
<dbReference type="InterPro" id="IPR011130">
    <property type="entry name" value="SecA_preprotein_X-link_dom"/>
</dbReference>
<dbReference type="InterPro" id="IPR044722">
    <property type="entry name" value="SecA_SF2_C"/>
</dbReference>
<dbReference type="InterPro" id="IPR011116">
    <property type="entry name" value="SecA_Wing/Scaffold"/>
</dbReference>
<dbReference type="InterPro" id="IPR036266">
    <property type="entry name" value="SecA_Wing/Scaffold_sf"/>
</dbReference>
<dbReference type="InterPro" id="IPR036670">
    <property type="entry name" value="SecA_X-link_sf"/>
</dbReference>
<dbReference type="NCBIfam" id="TIGR04221">
    <property type="entry name" value="SecA2_Mycobac"/>
    <property type="match status" value="1"/>
</dbReference>
<dbReference type="PANTHER" id="PTHR30612:SF0">
    <property type="entry name" value="CHLOROPLAST PROTEIN-TRANSPORTING ATPASE"/>
    <property type="match status" value="1"/>
</dbReference>
<dbReference type="PANTHER" id="PTHR30612">
    <property type="entry name" value="SECA INNER MEMBRANE COMPONENT OF SEC PROTEIN SECRETION SYSTEM"/>
    <property type="match status" value="1"/>
</dbReference>
<dbReference type="Pfam" id="PF21090">
    <property type="entry name" value="P-loop_SecA"/>
    <property type="match status" value="1"/>
</dbReference>
<dbReference type="Pfam" id="PF07517">
    <property type="entry name" value="SecA_DEAD"/>
    <property type="match status" value="1"/>
</dbReference>
<dbReference type="Pfam" id="PF01043">
    <property type="entry name" value="SecA_PP_bind"/>
    <property type="match status" value="1"/>
</dbReference>
<dbReference type="Pfam" id="PF07516">
    <property type="entry name" value="SecA_SW"/>
    <property type="match status" value="1"/>
</dbReference>
<dbReference type="PRINTS" id="PR00906">
    <property type="entry name" value="SECA"/>
</dbReference>
<dbReference type="SMART" id="SM00957">
    <property type="entry name" value="SecA_DEAD"/>
    <property type="match status" value="1"/>
</dbReference>
<dbReference type="SMART" id="SM00958">
    <property type="entry name" value="SecA_PP_bind"/>
    <property type="match status" value="1"/>
</dbReference>
<dbReference type="SUPFAM" id="SSF81886">
    <property type="entry name" value="Helical scaffold and wing domains of SecA"/>
    <property type="match status" value="1"/>
</dbReference>
<dbReference type="SUPFAM" id="SSF52540">
    <property type="entry name" value="P-loop containing nucleoside triphosphate hydrolases"/>
    <property type="match status" value="2"/>
</dbReference>
<dbReference type="SUPFAM" id="SSF81767">
    <property type="entry name" value="Pre-protein crosslinking domain of SecA"/>
    <property type="match status" value="1"/>
</dbReference>
<dbReference type="PROSITE" id="PS01312">
    <property type="entry name" value="SECA"/>
    <property type="match status" value="1"/>
</dbReference>
<dbReference type="PROSITE" id="PS51196">
    <property type="entry name" value="SECA_MOTOR_DEAD"/>
    <property type="match status" value="1"/>
</dbReference>
<comment type="function">
    <text evidence="1">Part of the Sec protein translocase complex. Interacts with the SecYEG preprotein conducting channel. Has a central role in coupling the hydrolysis of ATP to the transfer of proteins into and across the cell membrane, serving as an ATP-driven molecular motor driving the stepwise translocation of polypeptide chains across the membrane.</text>
</comment>
<comment type="catalytic activity">
    <reaction evidence="1">
        <text>ATP + H2O + cellular proteinSide 1 = ADP + phosphate + cellular proteinSide 2.</text>
        <dbReference type="EC" id="7.4.2.8"/>
    </reaction>
</comment>
<comment type="subunit">
    <text evidence="1">Monomer and homodimer. Part of the essential Sec protein translocation apparatus which comprises SecA, SecYEG and auxiliary proteins SecDF. Other proteins may also be involved.</text>
</comment>
<comment type="subcellular location">
    <subcellularLocation>
        <location evidence="1">Cell membrane</location>
        <topology evidence="1">Peripheral membrane protein</topology>
        <orientation evidence="1">Cytoplasmic side</orientation>
    </subcellularLocation>
    <subcellularLocation>
        <location evidence="1">Cytoplasm</location>
    </subcellularLocation>
    <text evidence="1">Distribution is 50-50.</text>
</comment>
<comment type="similarity">
    <text evidence="1">Belongs to the SecA family.</text>
</comment>
<evidence type="ECO:0000255" key="1">
    <source>
        <dbReference type="HAMAP-Rule" id="MF_01382"/>
    </source>
</evidence>
<sequence>MAGFDWFWKALGGKSGRNQKRSVAIVNQAENHVAELDALDDVALAQRAKDLASGGRIDNHAEFLAILGVASQRTLGLKPYPAQSQAVLRLIEGDVVHMATGEGKTLVGAMAATGLGLMGKRVHSITVNDYLAVRDAEWMRPLVEFFGLSVASISEKMDAGERRQAYKAAIVYGPVNEIGFDVLRDQLITRREDAVQHGADVAIIDEADSVLVDEALVPLVLAGNQPGHAPRGKITDVVRSLKENDDYTIDDDRRNVFLTDKGAAKLEQQLGISSLYDDEHVGSTLVQVNLALHAQALLIRDIHYIVRDSKVLLIDASRGRVADLQRWPDGLQAAVEAKEGLAVSEGGKILDTITLQALIGRYPMACGMTGTAVEATNQLRTFYDLHVSVIERNHPLKRFDEADRIYATMAEKNRAIIDEIALLHSTGQPVLVGTHDVAESEELATALRELNIEVSVLNAKNDAEEAQIIAEAGDIGRVTVSTQMAGRGTDIRLGGADEADYDEVVKLGGLAVIGTARHRSQRLDNQLRGRAGRQGDPGLSLFFVSLDDDVVVSGGSGESVSAQPDATGLIDSDRIRDWVGHCQRVTEGQLLEIHSQSWNYNKLLADQRVIIDERRERLLDTALAWEELAQHAPARAAELEDLDQSVREQAGRDIMLYHLDYNWSEHLALMDDVRESIHLRAIARETPLDEYHRIAVREFKDLAQRAVDDAVSTFKSVTIDHEGAHLDDEGLARPSATWTYMVSDNPLAGSGNSVISGIGNIFR</sequence>
<proteinExistence type="inferred from homology"/>
<gene>
    <name evidence="1" type="primary">secA2</name>
    <name type="ordered locus">cgR_1500</name>
</gene>
<reference key="1">
    <citation type="journal article" date="2007" name="Microbiology">
        <title>Comparative analysis of the Corynebacterium glutamicum group and complete genome sequence of strain R.</title>
        <authorList>
            <person name="Yukawa H."/>
            <person name="Omumasaba C.A."/>
            <person name="Nonaka H."/>
            <person name="Kos P."/>
            <person name="Okai N."/>
            <person name="Suzuki N."/>
            <person name="Suda M."/>
            <person name="Tsuge Y."/>
            <person name="Watanabe J."/>
            <person name="Ikeda Y."/>
            <person name="Vertes A.A."/>
            <person name="Inui M."/>
        </authorList>
    </citation>
    <scope>NUCLEOTIDE SEQUENCE [LARGE SCALE GENOMIC DNA]</scope>
    <source>
        <strain>R</strain>
    </source>
</reference>
<organism>
    <name type="scientific">Corynebacterium glutamicum (strain R)</name>
    <dbReference type="NCBI Taxonomy" id="340322"/>
    <lineage>
        <taxon>Bacteria</taxon>
        <taxon>Bacillati</taxon>
        <taxon>Actinomycetota</taxon>
        <taxon>Actinomycetes</taxon>
        <taxon>Mycobacteriales</taxon>
        <taxon>Corynebacteriaceae</taxon>
        <taxon>Corynebacterium</taxon>
    </lineage>
</organism>
<protein>
    <recommendedName>
        <fullName evidence="1">Protein translocase subunit SecA 2</fullName>
        <ecNumber evidence="1">7.4.2.8</ecNumber>
    </recommendedName>
</protein>